<gene>
    <name type="primary">talA</name>
    <name type="ordered locus">c2989</name>
</gene>
<sequence length="316" mass="35659">MNELDGIKQFTTVVADSGDIESIRHYHPQDATTNPSLLLKAAGLSQYEHLIDDAIAWGKKNGKTQEQQVVAACDKLAVNFGAEILKIVPGRVSTEVDARLSFDKEKSIEKARHLVDLYQQQGVEKSRILIKLASTWEGIRAAEELEKEGINCNLTLLFSFAQARACAEAGVFLISPFVGRIYDWYQARKPMDPYVVEEDPGVKSVRNIYDYYKQHHYETIVMGASFRRTEQILALTGCDRLTIAPNLLKELQEKVSPVVRKLIPPSQTFPRPAPMSEAEFRWEHNQDAMAVEKLSEGIRLFAVDQRKLEDLLAAKL</sequence>
<reference key="1">
    <citation type="journal article" date="2002" name="Proc. Natl. Acad. Sci. U.S.A.">
        <title>Extensive mosaic structure revealed by the complete genome sequence of uropathogenic Escherichia coli.</title>
        <authorList>
            <person name="Welch R.A."/>
            <person name="Burland V."/>
            <person name="Plunkett G. III"/>
            <person name="Redford P."/>
            <person name="Roesch P."/>
            <person name="Rasko D."/>
            <person name="Buckles E.L."/>
            <person name="Liou S.-R."/>
            <person name="Boutin A."/>
            <person name="Hackett J."/>
            <person name="Stroud D."/>
            <person name="Mayhew G.F."/>
            <person name="Rose D.J."/>
            <person name="Zhou S."/>
            <person name="Schwartz D.C."/>
            <person name="Perna N.T."/>
            <person name="Mobley H.L.T."/>
            <person name="Donnenberg M.S."/>
            <person name="Blattner F.R."/>
        </authorList>
    </citation>
    <scope>NUCLEOTIDE SEQUENCE [LARGE SCALE GENOMIC DNA]</scope>
    <source>
        <strain>CFT073 / ATCC 700928 / UPEC</strain>
    </source>
</reference>
<evidence type="ECO:0000250" key="1"/>
<evidence type="ECO:0000305" key="2"/>
<feature type="chain" id="PRO_0000173592" description="Transaldolase A">
    <location>
        <begin position="1"/>
        <end position="316"/>
    </location>
</feature>
<feature type="active site" description="Schiff-base intermediate with substrate" evidence="1">
    <location>
        <position position="131"/>
    </location>
</feature>
<dbReference type="EC" id="2.2.1.2"/>
<dbReference type="EMBL" id="AE014075">
    <property type="protein sequence ID" value="AAN81439.1"/>
    <property type="molecule type" value="Genomic_DNA"/>
</dbReference>
<dbReference type="SMR" id="P0A868"/>
<dbReference type="STRING" id="199310.c2989"/>
<dbReference type="KEGG" id="ecc:c2989"/>
<dbReference type="eggNOG" id="COG0176">
    <property type="taxonomic scope" value="Bacteria"/>
</dbReference>
<dbReference type="HOGENOM" id="CLU_047470_0_1_6"/>
<dbReference type="BioCyc" id="ECOL199310:C2989-MONOMER"/>
<dbReference type="UniPathway" id="UPA00115">
    <property type="reaction ID" value="UER00414"/>
</dbReference>
<dbReference type="Proteomes" id="UP000001410">
    <property type="component" value="Chromosome"/>
</dbReference>
<dbReference type="GO" id="GO:0005829">
    <property type="term" value="C:cytosol"/>
    <property type="evidence" value="ECO:0007669"/>
    <property type="project" value="TreeGrafter"/>
</dbReference>
<dbReference type="GO" id="GO:0004801">
    <property type="term" value="F:transaldolase activity"/>
    <property type="evidence" value="ECO:0000250"/>
    <property type="project" value="UniProtKB"/>
</dbReference>
<dbReference type="GO" id="GO:0005975">
    <property type="term" value="P:carbohydrate metabolic process"/>
    <property type="evidence" value="ECO:0007669"/>
    <property type="project" value="InterPro"/>
</dbReference>
<dbReference type="GO" id="GO:0006098">
    <property type="term" value="P:pentose-phosphate shunt"/>
    <property type="evidence" value="ECO:0007669"/>
    <property type="project" value="UniProtKB-UniRule"/>
</dbReference>
<dbReference type="CDD" id="cd00957">
    <property type="entry name" value="Transaldolase_TalAB"/>
    <property type="match status" value="1"/>
</dbReference>
<dbReference type="FunFam" id="3.20.20.70:FF:000002">
    <property type="entry name" value="Transaldolase"/>
    <property type="match status" value="1"/>
</dbReference>
<dbReference type="Gene3D" id="3.20.20.70">
    <property type="entry name" value="Aldolase class I"/>
    <property type="match status" value="1"/>
</dbReference>
<dbReference type="HAMAP" id="MF_00492">
    <property type="entry name" value="Transaldolase_1"/>
    <property type="match status" value="1"/>
</dbReference>
<dbReference type="InterPro" id="IPR013785">
    <property type="entry name" value="Aldolase_TIM"/>
</dbReference>
<dbReference type="InterPro" id="IPR001585">
    <property type="entry name" value="TAL/FSA"/>
</dbReference>
<dbReference type="InterPro" id="IPR004730">
    <property type="entry name" value="Transaldolase_1"/>
</dbReference>
<dbReference type="InterPro" id="IPR018225">
    <property type="entry name" value="Transaldolase_AS"/>
</dbReference>
<dbReference type="NCBIfam" id="NF009001">
    <property type="entry name" value="PRK12346.1"/>
    <property type="match status" value="1"/>
</dbReference>
<dbReference type="NCBIfam" id="TIGR00874">
    <property type="entry name" value="talAB"/>
    <property type="match status" value="1"/>
</dbReference>
<dbReference type="PANTHER" id="PTHR10683">
    <property type="entry name" value="TRANSALDOLASE"/>
    <property type="match status" value="1"/>
</dbReference>
<dbReference type="PANTHER" id="PTHR10683:SF16">
    <property type="entry name" value="TRANSALDOLASE A"/>
    <property type="match status" value="1"/>
</dbReference>
<dbReference type="Pfam" id="PF00923">
    <property type="entry name" value="TAL_FSA"/>
    <property type="match status" value="1"/>
</dbReference>
<dbReference type="SUPFAM" id="SSF51569">
    <property type="entry name" value="Aldolase"/>
    <property type="match status" value="1"/>
</dbReference>
<dbReference type="PROSITE" id="PS01054">
    <property type="entry name" value="TRANSALDOLASE_1"/>
    <property type="match status" value="1"/>
</dbReference>
<dbReference type="PROSITE" id="PS00958">
    <property type="entry name" value="TRANSALDOLASE_2"/>
    <property type="match status" value="1"/>
</dbReference>
<organism>
    <name type="scientific">Escherichia coli O6:H1 (strain CFT073 / ATCC 700928 / UPEC)</name>
    <dbReference type="NCBI Taxonomy" id="199310"/>
    <lineage>
        <taxon>Bacteria</taxon>
        <taxon>Pseudomonadati</taxon>
        <taxon>Pseudomonadota</taxon>
        <taxon>Gammaproteobacteria</taxon>
        <taxon>Enterobacterales</taxon>
        <taxon>Enterobacteriaceae</taxon>
        <taxon>Escherichia</taxon>
    </lineage>
</organism>
<name>TALA_ECOL6</name>
<keyword id="KW-0963">Cytoplasm</keyword>
<keyword id="KW-0570">Pentose shunt</keyword>
<keyword id="KW-1185">Reference proteome</keyword>
<keyword id="KW-0704">Schiff base</keyword>
<keyword id="KW-0808">Transferase</keyword>
<accession>P0A868</accession>
<accession>P78258</accession>
<accession>P80218</accession>
<protein>
    <recommendedName>
        <fullName>Transaldolase A</fullName>
        <ecNumber>2.2.1.2</ecNumber>
    </recommendedName>
</protein>
<proteinExistence type="inferred from homology"/>
<comment type="function">
    <text evidence="1">Transaldolase is important for the balance of metabolites in the pentose-phosphate pathway.</text>
</comment>
<comment type="catalytic activity">
    <reaction>
        <text>D-sedoheptulose 7-phosphate + D-glyceraldehyde 3-phosphate = D-erythrose 4-phosphate + beta-D-fructose 6-phosphate</text>
        <dbReference type="Rhea" id="RHEA:17053"/>
        <dbReference type="ChEBI" id="CHEBI:16897"/>
        <dbReference type="ChEBI" id="CHEBI:57483"/>
        <dbReference type="ChEBI" id="CHEBI:57634"/>
        <dbReference type="ChEBI" id="CHEBI:59776"/>
        <dbReference type="EC" id="2.2.1.2"/>
    </reaction>
</comment>
<comment type="pathway">
    <text>Carbohydrate degradation; pentose phosphate pathway; D-glyceraldehyde 3-phosphate and beta-D-fructose 6-phosphate from D-ribose 5-phosphate and D-xylulose 5-phosphate (non-oxidative stage): step 2/3.</text>
</comment>
<comment type="subunit">
    <text evidence="1">Homodimer.</text>
</comment>
<comment type="subcellular location">
    <subcellularLocation>
        <location evidence="1">Cytoplasm</location>
    </subcellularLocation>
</comment>
<comment type="similarity">
    <text evidence="2">Belongs to the transaldolase family. Type 1 subfamily.</text>
</comment>